<keyword id="KW-0007">Acetylation</keyword>
<keyword id="KW-0274">FAD</keyword>
<keyword id="KW-0285">Flavoprotein</keyword>
<keyword id="KW-0496">Mitochondrion</keyword>
<keyword id="KW-0560">Oxidoreductase</keyword>
<keyword id="KW-1185">Reference proteome</keyword>
<keyword id="KW-0809">Transit peptide</keyword>
<proteinExistence type="evidence at protein level"/>
<name>L2HDH_MOUSE</name>
<protein>
    <recommendedName>
        <fullName>L-2-hydroxyglutarate dehydrogenase, mitochondrial</fullName>
        <ecNumber>1.1.99.2</ecNumber>
    </recommendedName>
    <alternativeName>
        <fullName>Duranin</fullName>
    </alternativeName>
</protein>
<dbReference type="EC" id="1.1.99.2"/>
<dbReference type="EMBL" id="AK145228">
    <property type="protein sequence ID" value="BAE26312.1"/>
    <property type="molecule type" value="mRNA"/>
</dbReference>
<dbReference type="EMBL" id="AK152450">
    <property type="protein sequence ID" value="BAE31229.1"/>
    <property type="molecule type" value="mRNA"/>
</dbReference>
<dbReference type="EMBL" id="AK168429">
    <property type="protein sequence ID" value="BAE40337.1"/>
    <property type="molecule type" value="mRNA"/>
</dbReference>
<dbReference type="EMBL" id="BC016226">
    <property type="protein sequence ID" value="AAH16226.1"/>
    <property type="molecule type" value="mRNA"/>
</dbReference>
<dbReference type="CCDS" id="CCDS25953.1"/>
<dbReference type="RefSeq" id="NP_663418.1">
    <property type="nucleotide sequence ID" value="NM_145443.2"/>
</dbReference>
<dbReference type="SMR" id="Q91YP0"/>
<dbReference type="FunCoup" id="Q91YP0">
    <property type="interactions" value="1840"/>
</dbReference>
<dbReference type="STRING" id="10090.ENSMUSP00000021370"/>
<dbReference type="GlyGen" id="Q91YP0">
    <property type="glycosylation" value="1 site, 1 O-linked glycan (1 site)"/>
</dbReference>
<dbReference type="iPTMnet" id="Q91YP0"/>
<dbReference type="PhosphoSitePlus" id="Q91YP0"/>
<dbReference type="SwissPalm" id="Q91YP0"/>
<dbReference type="jPOST" id="Q91YP0"/>
<dbReference type="PaxDb" id="10090-ENSMUSP00000021370"/>
<dbReference type="PeptideAtlas" id="Q91YP0"/>
<dbReference type="ProteomicsDB" id="264823"/>
<dbReference type="Pumba" id="Q91YP0"/>
<dbReference type="Antibodypedia" id="47264">
    <property type="antibodies" value="181 antibodies from 26 providers"/>
</dbReference>
<dbReference type="DNASU" id="217666"/>
<dbReference type="Ensembl" id="ENSMUST00000021370.10">
    <property type="protein sequence ID" value="ENSMUSP00000021370.9"/>
    <property type="gene ID" value="ENSMUSG00000020988.10"/>
</dbReference>
<dbReference type="GeneID" id="217666"/>
<dbReference type="KEGG" id="mmu:217666"/>
<dbReference type="UCSC" id="uc011ynb.1">
    <property type="organism name" value="mouse"/>
</dbReference>
<dbReference type="AGR" id="MGI:2384968"/>
<dbReference type="CTD" id="79944"/>
<dbReference type="MGI" id="MGI:2384968">
    <property type="gene designation" value="L2hgdh"/>
</dbReference>
<dbReference type="VEuPathDB" id="HostDB:ENSMUSG00000020988"/>
<dbReference type="eggNOG" id="KOG2665">
    <property type="taxonomic scope" value="Eukaryota"/>
</dbReference>
<dbReference type="GeneTree" id="ENSGT00490000043421"/>
<dbReference type="HOGENOM" id="CLU_024775_0_0_1"/>
<dbReference type="InParanoid" id="Q91YP0"/>
<dbReference type="OMA" id="GVHFTRM"/>
<dbReference type="OrthoDB" id="498204at2759"/>
<dbReference type="PhylomeDB" id="Q91YP0"/>
<dbReference type="TreeFam" id="TF105922"/>
<dbReference type="Reactome" id="R-MMU-880009">
    <property type="pathway name" value="Interconversion of 2-oxoglutarate and 2-hydroxyglutarate"/>
</dbReference>
<dbReference type="BioGRID-ORCS" id="217666">
    <property type="hits" value="2 hits in 74 CRISPR screens"/>
</dbReference>
<dbReference type="ChiTaRS" id="L2hgdh">
    <property type="organism name" value="mouse"/>
</dbReference>
<dbReference type="PRO" id="PR:Q91YP0"/>
<dbReference type="Proteomes" id="UP000000589">
    <property type="component" value="Chromosome 12"/>
</dbReference>
<dbReference type="RNAct" id="Q91YP0">
    <property type="molecule type" value="protein"/>
</dbReference>
<dbReference type="Bgee" id="ENSMUSG00000020988">
    <property type="expression patterns" value="Expressed in right kidney and 240 other cell types or tissues"/>
</dbReference>
<dbReference type="ExpressionAtlas" id="Q91YP0">
    <property type="expression patterns" value="baseline and differential"/>
</dbReference>
<dbReference type="GO" id="GO:0016020">
    <property type="term" value="C:membrane"/>
    <property type="evidence" value="ECO:0000250"/>
    <property type="project" value="HGNC-UCL"/>
</dbReference>
<dbReference type="GO" id="GO:0005739">
    <property type="term" value="C:mitochondrion"/>
    <property type="evidence" value="ECO:0007005"/>
    <property type="project" value="MGI"/>
</dbReference>
<dbReference type="GO" id="GO:0047545">
    <property type="term" value="F:2-hydroxyglutarate dehydrogenase activity"/>
    <property type="evidence" value="ECO:0000250"/>
    <property type="project" value="HGNC-UCL"/>
</dbReference>
<dbReference type="GO" id="GO:0044281">
    <property type="term" value="P:small molecule metabolic process"/>
    <property type="evidence" value="ECO:0000250"/>
    <property type="project" value="HGNC-UCL"/>
</dbReference>
<dbReference type="Gene3D" id="3.30.9.10">
    <property type="entry name" value="D-Amino Acid Oxidase, subunit A, domain 2"/>
    <property type="match status" value="1"/>
</dbReference>
<dbReference type="Gene3D" id="3.50.50.60">
    <property type="entry name" value="FAD/NAD(P)-binding domain"/>
    <property type="match status" value="1"/>
</dbReference>
<dbReference type="InterPro" id="IPR006076">
    <property type="entry name" value="FAD-dep_OxRdtase"/>
</dbReference>
<dbReference type="InterPro" id="IPR036188">
    <property type="entry name" value="FAD/NAD-bd_sf"/>
</dbReference>
<dbReference type="NCBIfam" id="NF008726">
    <property type="entry name" value="PRK11728.1"/>
    <property type="match status" value="1"/>
</dbReference>
<dbReference type="PANTHER" id="PTHR43104">
    <property type="entry name" value="L-2-HYDROXYGLUTARATE DEHYDROGENASE, MITOCHONDRIAL"/>
    <property type="match status" value="1"/>
</dbReference>
<dbReference type="PANTHER" id="PTHR43104:SF2">
    <property type="entry name" value="L-2-HYDROXYGLUTARATE DEHYDROGENASE, MITOCHONDRIAL"/>
    <property type="match status" value="1"/>
</dbReference>
<dbReference type="Pfam" id="PF01266">
    <property type="entry name" value="DAO"/>
    <property type="match status" value="1"/>
</dbReference>
<dbReference type="SUPFAM" id="SSF51905">
    <property type="entry name" value="FAD/NAD(P)-binding domain"/>
    <property type="match status" value="1"/>
</dbReference>
<organism>
    <name type="scientific">Mus musculus</name>
    <name type="common">Mouse</name>
    <dbReference type="NCBI Taxonomy" id="10090"/>
    <lineage>
        <taxon>Eukaryota</taxon>
        <taxon>Metazoa</taxon>
        <taxon>Chordata</taxon>
        <taxon>Craniata</taxon>
        <taxon>Vertebrata</taxon>
        <taxon>Euteleostomi</taxon>
        <taxon>Mammalia</taxon>
        <taxon>Eutheria</taxon>
        <taxon>Euarchontoglires</taxon>
        <taxon>Glires</taxon>
        <taxon>Rodentia</taxon>
        <taxon>Myomorpha</taxon>
        <taxon>Muroidea</taxon>
        <taxon>Muridae</taxon>
        <taxon>Murinae</taxon>
        <taxon>Mus</taxon>
        <taxon>Mus</taxon>
    </lineage>
</organism>
<comment type="catalytic activity">
    <reaction>
        <text>(S)-2-hydroxyglutarate + A = 2-oxoglutarate + AH2</text>
        <dbReference type="Rhea" id="RHEA:21252"/>
        <dbReference type="ChEBI" id="CHEBI:13193"/>
        <dbReference type="ChEBI" id="CHEBI:16782"/>
        <dbReference type="ChEBI" id="CHEBI:16810"/>
        <dbReference type="ChEBI" id="CHEBI:17499"/>
        <dbReference type="EC" id="1.1.99.2"/>
    </reaction>
</comment>
<comment type="cofactor">
    <cofactor evidence="1">
        <name>FAD</name>
        <dbReference type="ChEBI" id="CHEBI:57692"/>
    </cofactor>
</comment>
<comment type="subcellular location">
    <subcellularLocation>
        <location evidence="1">Mitochondrion</location>
    </subcellularLocation>
</comment>
<comment type="similarity">
    <text evidence="3">Belongs to the L2HGDH family.</text>
</comment>
<feature type="transit peptide" description="Mitochondrion" evidence="2">
    <location>
        <begin position="1"/>
        <end position="52"/>
    </location>
</feature>
<feature type="chain" id="PRO_0000228130" description="L-2-hydroxyglutarate dehydrogenase, mitochondrial">
    <location>
        <begin position="53"/>
        <end position="464"/>
    </location>
</feature>
<feature type="modified residue" description="N6-acetyllysine" evidence="4">
    <location>
        <position position="105"/>
    </location>
</feature>
<feature type="modified residue" description="N6-acetyllysine" evidence="4">
    <location>
        <position position="174"/>
    </location>
</feature>
<feature type="sequence conflict" description="In Ref. 1; BAE31229." evidence="3" ref="1">
    <original>M</original>
    <variation>I</variation>
    <location>
        <position position="184"/>
    </location>
</feature>
<feature type="sequence conflict" description="In Ref. 1; BAE26312." evidence="3" ref="1">
    <original>R</original>
    <variation>K</variation>
    <location>
        <position position="216"/>
    </location>
</feature>
<feature type="sequence conflict" description="In Ref. 1; BAE26312." evidence="3" ref="1">
    <original>I</original>
    <variation>V</variation>
    <location>
        <position position="225"/>
    </location>
</feature>
<feature type="sequence conflict" description="In Ref. 1; BAE31229." evidence="3" ref="1">
    <original>E</original>
    <variation>G</variation>
    <location>
        <position position="228"/>
    </location>
</feature>
<feature type="sequence conflict" description="In Ref. 1; BAE40337." evidence="3" ref="1">
    <original>L</original>
    <variation>P</variation>
    <location>
        <position position="416"/>
    </location>
</feature>
<accession>Q91YP0</accession>
<accession>Q3TH61</accession>
<accession>Q3U7Z0</accession>
<accession>Q3ULY6</accession>
<evidence type="ECO:0000250" key="1"/>
<evidence type="ECO:0000255" key="2"/>
<evidence type="ECO:0000305" key="3"/>
<evidence type="ECO:0007744" key="4">
    <source>
    </source>
</evidence>
<sequence>MWPTLRYVGGVCGLARYCVAGGFLRASGPASGVPGLLCGGGRRSSSTSSFDIVIVGGGIVGLASARTLILKHPGLSIGVVEKEKDLALHQTGHNSGVIHSGIYYKPESLKAKLCVEGAALIYEYCNLKGIPYRQCGKLIVAVEQEEIPRLQALYERGLQNGVEGLRLIQQEDIKKKEPYCRGLMAIDCPYTGIVNYQQVALSFAQDFQEAGGSILRDFEVKGIEIAKENSSRSKDGMNYPIAVKNSKGKEIRCRYVVTCAGLYSDRISELSGCNPDPQIVPFRGDYLVLKPEKGYLVKGNIYPVPDSRFPFLGVHFTPRLDGTIWLGPNAVLAFKREGYRPFDFDARDVMEVILKSGFINLVFQHFSYGVNEMYKACFLSETVKHLQKFIPEITISDVLRGPAGVRAQALDRDGNLVEDFVFDGGTGEIADRVLHVRNAPSPAATSSLAISRMIAEEAQQRFKL</sequence>
<gene>
    <name type="primary">L2hgdh</name>
</gene>
<reference key="1">
    <citation type="journal article" date="2005" name="Science">
        <title>The transcriptional landscape of the mammalian genome.</title>
        <authorList>
            <person name="Carninci P."/>
            <person name="Kasukawa T."/>
            <person name="Katayama S."/>
            <person name="Gough J."/>
            <person name="Frith M.C."/>
            <person name="Maeda N."/>
            <person name="Oyama R."/>
            <person name="Ravasi T."/>
            <person name="Lenhard B."/>
            <person name="Wells C."/>
            <person name="Kodzius R."/>
            <person name="Shimokawa K."/>
            <person name="Bajic V.B."/>
            <person name="Brenner S.E."/>
            <person name="Batalov S."/>
            <person name="Forrest A.R."/>
            <person name="Zavolan M."/>
            <person name="Davis M.J."/>
            <person name="Wilming L.G."/>
            <person name="Aidinis V."/>
            <person name="Allen J.E."/>
            <person name="Ambesi-Impiombato A."/>
            <person name="Apweiler R."/>
            <person name="Aturaliya R.N."/>
            <person name="Bailey T.L."/>
            <person name="Bansal M."/>
            <person name="Baxter L."/>
            <person name="Beisel K.W."/>
            <person name="Bersano T."/>
            <person name="Bono H."/>
            <person name="Chalk A.M."/>
            <person name="Chiu K.P."/>
            <person name="Choudhary V."/>
            <person name="Christoffels A."/>
            <person name="Clutterbuck D.R."/>
            <person name="Crowe M.L."/>
            <person name="Dalla E."/>
            <person name="Dalrymple B.P."/>
            <person name="de Bono B."/>
            <person name="Della Gatta G."/>
            <person name="di Bernardo D."/>
            <person name="Down T."/>
            <person name="Engstrom P."/>
            <person name="Fagiolini M."/>
            <person name="Faulkner G."/>
            <person name="Fletcher C.F."/>
            <person name="Fukushima T."/>
            <person name="Furuno M."/>
            <person name="Futaki S."/>
            <person name="Gariboldi M."/>
            <person name="Georgii-Hemming P."/>
            <person name="Gingeras T.R."/>
            <person name="Gojobori T."/>
            <person name="Green R.E."/>
            <person name="Gustincich S."/>
            <person name="Harbers M."/>
            <person name="Hayashi Y."/>
            <person name="Hensch T.K."/>
            <person name="Hirokawa N."/>
            <person name="Hill D."/>
            <person name="Huminiecki L."/>
            <person name="Iacono M."/>
            <person name="Ikeo K."/>
            <person name="Iwama A."/>
            <person name="Ishikawa T."/>
            <person name="Jakt M."/>
            <person name="Kanapin A."/>
            <person name="Katoh M."/>
            <person name="Kawasawa Y."/>
            <person name="Kelso J."/>
            <person name="Kitamura H."/>
            <person name="Kitano H."/>
            <person name="Kollias G."/>
            <person name="Krishnan S.P."/>
            <person name="Kruger A."/>
            <person name="Kummerfeld S.K."/>
            <person name="Kurochkin I.V."/>
            <person name="Lareau L.F."/>
            <person name="Lazarevic D."/>
            <person name="Lipovich L."/>
            <person name="Liu J."/>
            <person name="Liuni S."/>
            <person name="McWilliam S."/>
            <person name="Madan Babu M."/>
            <person name="Madera M."/>
            <person name="Marchionni L."/>
            <person name="Matsuda H."/>
            <person name="Matsuzawa S."/>
            <person name="Miki H."/>
            <person name="Mignone F."/>
            <person name="Miyake S."/>
            <person name="Morris K."/>
            <person name="Mottagui-Tabar S."/>
            <person name="Mulder N."/>
            <person name="Nakano N."/>
            <person name="Nakauchi H."/>
            <person name="Ng P."/>
            <person name="Nilsson R."/>
            <person name="Nishiguchi S."/>
            <person name="Nishikawa S."/>
            <person name="Nori F."/>
            <person name="Ohara O."/>
            <person name="Okazaki Y."/>
            <person name="Orlando V."/>
            <person name="Pang K.C."/>
            <person name="Pavan W.J."/>
            <person name="Pavesi G."/>
            <person name="Pesole G."/>
            <person name="Petrovsky N."/>
            <person name="Piazza S."/>
            <person name="Reed J."/>
            <person name="Reid J.F."/>
            <person name="Ring B.Z."/>
            <person name="Ringwald M."/>
            <person name="Rost B."/>
            <person name="Ruan Y."/>
            <person name="Salzberg S.L."/>
            <person name="Sandelin A."/>
            <person name="Schneider C."/>
            <person name="Schoenbach C."/>
            <person name="Sekiguchi K."/>
            <person name="Semple C.A."/>
            <person name="Seno S."/>
            <person name="Sessa L."/>
            <person name="Sheng Y."/>
            <person name="Shibata Y."/>
            <person name="Shimada H."/>
            <person name="Shimada K."/>
            <person name="Silva D."/>
            <person name="Sinclair B."/>
            <person name="Sperling S."/>
            <person name="Stupka E."/>
            <person name="Sugiura K."/>
            <person name="Sultana R."/>
            <person name="Takenaka Y."/>
            <person name="Taki K."/>
            <person name="Tammoja K."/>
            <person name="Tan S.L."/>
            <person name="Tang S."/>
            <person name="Taylor M.S."/>
            <person name="Tegner J."/>
            <person name="Teichmann S.A."/>
            <person name="Ueda H.R."/>
            <person name="van Nimwegen E."/>
            <person name="Verardo R."/>
            <person name="Wei C.L."/>
            <person name="Yagi K."/>
            <person name="Yamanishi H."/>
            <person name="Zabarovsky E."/>
            <person name="Zhu S."/>
            <person name="Zimmer A."/>
            <person name="Hide W."/>
            <person name="Bult C."/>
            <person name="Grimmond S.M."/>
            <person name="Teasdale R.D."/>
            <person name="Liu E.T."/>
            <person name="Brusic V."/>
            <person name="Quackenbush J."/>
            <person name="Wahlestedt C."/>
            <person name="Mattick J.S."/>
            <person name="Hume D.A."/>
            <person name="Kai C."/>
            <person name="Sasaki D."/>
            <person name="Tomaru Y."/>
            <person name="Fukuda S."/>
            <person name="Kanamori-Katayama M."/>
            <person name="Suzuki M."/>
            <person name="Aoki J."/>
            <person name="Arakawa T."/>
            <person name="Iida J."/>
            <person name="Imamura K."/>
            <person name="Itoh M."/>
            <person name="Kato T."/>
            <person name="Kawaji H."/>
            <person name="Kawagashira N."/>
            <person name="Kawashima T."/>
            <person name="Kojima M."/>
            <person name="Kondo S."/>
            <person name="Konno H."/>
            <person name="Nakano K."/>
            <person name="Ninomiya N."/>
            <person name="Nishio T."/>
            <person name="Okada M."/>
            <person name="Plessy C."/>
            <person name="Shibata K."/>
            <person name="Shiraki T."/>
            <person name="Suzuki S."/>
            <person name="Tagami M."/>
            <person name="Waki K."/>
            <person name="Watahiki A."/>
            <person name="Okamura-Oho Y."/>
            <person name="Suzuki H."/>
            <person name="Kawai J."/>
            <person name="Hayashizaki Y."/>
        </authorList>
    </citation>
    <scope>NUCLEOTIDE SEQUENCE [LARGE SCALE MRNA]</scope>
    <source>
        <strain>C57BL/6J</strain>
        <tissue>Amnion</tissue>
        <tissue>Bone marrow</tissue>
        <tissue>Mammary gland</tissue>
    </source>
</reference>
<reference key="2">
    <citation type="journal article" date="2004" name="Genome Res.">
        <title>The status, quality, and expansion of the NIH full-length cDNA project: the Mammalian Gene Collection (MGC).</title>
        <authorList>
            <consortium name="The MGC Project Team"/>
        </authorList>
    </citation>
    <scope>NUCLEOTIDE SEQUENCE [LARGE SCALE MRNA]</scope>
    <source>
        <strain>FVB/N</strain>
        <tissue>Mammary tumor</tissue>
    </source>
</reference>
<reference key="3">
    <citation type="journal article" date="2010" name="Cell">
        <title>A tissue-specific atlas of mouse protein phosphorylation and expression.</title>
        <authorList>
            <person name="Huttlin E.L."/>
            <person name="Jedrychowski M.P."/>
            <person name="Elias J.E."/>
            <person name="Goswami T."/>
            <person name="Rad R."/>
            <person name="Beausoleil S.A."/>
            <person name="Villen J."/>
            <person name="Haas W."/>
            <person name="Sowa M.E."/>
            <person name="Gygi S.P."/>
        </authorList>
    </citation>
    <scope>IDENTIFICATION BY MASS SPECTROMETRY [LARGE SCALE ANALYSIS]</scope>
    <source>
        <tissue>Brain</tissue>
        <tissue>Brown adipose tissue</tissue>
        <tissue>Heart</tissue>
        <tissue>Kidney</tissue>
        <tissue>Liver</tissue>
        <tissue>Pancreas</tissue>
        <tissue>Spleen</tissue>
        <tissue>Testis</tissue>
    </source>
</reference>
<reference key="4">
    <citation type="journal article" date="2013" name="Proc. Natl. Acad. Sci. U.S.A.">
        <title>Label-free quantitative proteomics of the lysine acetylome in mitochondria identifies substrates of SIRT3 in metabolic pathways.</title>
        <authorList>
            <person name="Rardin M.J."/>
            <person name="Newman J.C."/>
            <person name="Held J.M."/>
            <person name="Cusack M.P."/>
            <person name="Sorensen D.J."/>
            <person name="Li B."/>
            <person name="Schilling B."/>
            <person name="Mooney S.D."/>
            <person name="Kahn C.R."/>
            <person name="Verdin E."/>
            <person name="Gibson B.W."/>
        </authorList>
    </citation>
    <scope>ACETYLATION [LARGE SCALE ANALYSIS] AT LYS-105 AND LYS-174</scope>
    <scope>IDENTIFICATION BY MASS SPECTROMETRY [LARGE SCALE ANALYSIS]</scope>
    <source>
        <tissue>Liver</tissue>
    </source>
</reference>